<name>RHMD_BURO0</name>
<sequence length="392" mass="43848">MSMPTIRAVRALTVRGGGADYHDQDAGHWIDDHIATPMSRYPEYRQSRQSFGINVLGTLVIEVEASDGTVGFAVTTGGEIGAFIVERHLARFIEGQRVTDIEKMWDQMFHATLYYGRKGVVLNAISGVDLALWDLLAKVRREPVHQLLGGKVRDELEFYATGARPDLAKEMGFIGGKLPLHHGPAEGEAGLRRNLDALADMRSRVGADFWLMLDCWMSLDVPYATRLAHEAHALGLKWIEECLPPDDYWGYAKLRRDVPRGMLVTTGEHEATRWGFRMLLEMECCDIIQPDVGWCGGLTELIRISALADARGVLVIPHGSSVYSYHFVATRHNSPFAEFLMMAPQADRVVPMFDPLLLDEPVPVGGRMKVPDTPGFGVRLNPDVRMQRPYEH</sequence>
<dbReference type="EC" id="4.2.1.90" evidence="1"/>
<dbReference type="EMBL" id="CP000960">
    <property type="protein sequence ID" value="ACA95353.1"/>
    <property type="molecule type" value="Genomic_DNA"/>
</dbReference>
<dbReference type="RefSeq" id="WP_012336767.1">
    <property type="nucleotide sequence ID" value="NC_010512.1"/>
</dbReference>
<dbReference type="SMR" id="B1KAV6"/>
<dbReference type="GeneID" id="83052874"/>
<dbReference type="KEGG" id="bcm:Bcenmc03_6234"/>
<dbReference type="HOGENOM" id="CLU_030273_1_0_4"/>
<dbReference type="Proteomes" id="UP000002169">
    <property type="component" value="Chromosome 3"/>
</dbReference>
<dbReference type="GO" id="GO:0050032">
    <property type="term" value="F:L-rhamnonate dehydratase activity"/>
    <property type="evidence" value="ECO:0007669"/>
    <property type="project" value="UniProtKB-UniRule"/>
</dbReference>
<dbReference type="GO" id="GO:0000287">
    <property type="term" value="F:magnesium ion binding"/>
    <property type="evidence" value="ECO:0007669"/>
    <property type="project" value="UniProtKB-UniRule"/>
</dbReference>
<dbReference type="GO" id="GO:0009063">
    <property type="term" value="P:amino acid catabolic process"/>
    <property type="evidence" value="ECO:0007669"/>
    <property type="project" value="InterPro"/>
</dbReference>
<dbReference type="GO" id="GO:0016052">
    <property type="term" value="P:carbohydrate catabolic process"/>
    <property type="evidence" value="ECO:0007669"/>
    <property type="project" value="TreeGrafter"/>
</dbReference>
<dbReference type="CDD" id="cd03327">
    <property type="entry name" value="MR_like_2"/>
    <property type="match status" value="1"/>
</dbReference>
<dbReference type="FunFam" id="3.20.20.120:FF:000005">
    <property type="entry name" value="Putative L-rhamnonate dehydratase"/>
    <property type="match status" value="1"/>
</dbReference>
<dbReference type="Gene3D" id="3.20.20.120">
    <property type="entry name" value="Enolase-like C-terminal domain"/>
    <property type="match status" value="1"/>
</dbReference>
<dbReference type="Gene3D" id="3.30.390.10">
    <property type="entry name" value="Enolase-like, N-terminal domain"/>
    <property type="match status" value="1"/>
</dbReference>
<dbReference type="HAMAP" id="MF_01288">
    <property type="entry name" value="Rhamnon_dehydrat"/>
    <property type="match status" value="1"/>
</dbReference>
<dbReference type="InterPro" id="IPR036849">
    <property type="entry name" value="Enolase-like_C_sf"/>
</dbReference>
<dbReference type="InterPro" id="IPR029017">
    <property type="entry name" value="Enolase-like_N"/>
</dbReference>
<dbReference type="InterPro" id="IPR029065">
    <property type="entry name" value="Enolase_C-like"/>
</dbReference>
<dbReference type="InterPro" id="IPR023444">
    <property type="entry name" value="L-Rhamnon_dehydrat"/>
</dbReference>
<dbReference type="InterPro" id="IPR018110">
    <property type="entry name" value="Mandel_Rmase/mucon_lact_enz_CS"/>
</dbReference>
<dbReference type="InterPro" id="IPR013342">
    <property type="entry name" value="Mandelate_racemase_C"/>
</dbReference>
<dbReference type="InterPro" id="IPR013341">
    <property type="entry name" value="Mandelate_racemase_N_dom"/>
</dbReference>
<dbReference type="InterPro" id="IPR046945">
    <property type="entry name" value="RHMD-like"/>
</dbReference>
<dbReference type="NCBIfam" id="NF011968">
    <property type="entry name" value="PRK15440.1"/>
    <property type="match status" value="1"/>
</dbReference>
<dbReference type="PANTHER" id="PTHR13794">
    <property type="entry name" value="ENOLASE SUPERFAMILY, MANDELATE RACEMASE"/>
    <property type="match status" value="1"/>
</dbReference>
<dbReference type="PANTHER" id="PTHR13794:SF58">
    <property type="entry name" value="MITOCHONDRIAL ENOLASE SUPERFAMILY MEMBER 1"/>
    <property type="match status" value="1"/>
</dbReference>
<dbReference type="Pfam" id="PF13378">
    <property type="entry name" value="MR_MLE_C"/>
    <property type="match status" value="1"/>
</dbReference>
<dbReference type="Pfam" id="PF02746">
    <property type="entry name" value="MR_MLE_N"/>
    <property type="match status" value="1"/>
</dbReference>
<dbReference type="SFLD" id="SFLDS00001">
    <property type="entry name" value="Enolase"/>
    <property type="match status" value="1"/>
</dbReference>
<dbReference type="SFLD" id="SFLDF00006">
    <property type="entry name" value="rhamnonate_dehydratase"/>
    <property type="match status" value="1"/>
</dbReference>
<dbReference type="SMART" id="SM00922">
    <property type="entry name" value="MR_MLE"/>
    <property type="match status" value="1"/>
</dbReference>
<dbReference type="SUPFAM" id="SSF51604">
    <property type="entry name" value="Enolase C-terminal domain-like"/>
    <property type="match status" value="1"/>
</dbReference>
<dbReference type="SUPFAM" id="SSF54826">
    <property type="entry name" value="Enolase N-terminal domain-like"/>
    <property type="match status" value="1"/>
</dbReference>
<dbReference type="PROSITE" id="PS00908">
    <property type="entry name" value="MR_MLE_1"/>
    <property type="match status" value="1"/>
</dbReference>
<organism>
    <name type="scientific">Burkholderia orbicola (strain MC0-3)</name>
    <dbReference type="NCBI Taxonomy" id="406425"/>
    <lineage>
        <taxon>Bacteria</taxon>
        <taxon>Pseudomonadati</taxon>
        <taxon>Pseudomonadota</taxon>
        <taxon>Betaproteobacteria</taxon>
        <taxon>Burkholderiales</taxon>
        <taxon>Burkholderiaceae</taxon>
        <taxon>Burkholderia</taxon>
        <taxon>Burkholderia cepacia complex</taxon>
        <taxon>Burkholderia orbicola</taxon>
    </lineage>
</organism>
<protein>
    <recommendedName>
        <fullName evidence="1">L-rhamnonate dehydratase</fullName>
        <shortName evidence="1">RhamD</shortName>
        <ecNumber evidence="1">4.2.1.90</ecNumber>
    </recommendedName>
</protein>
<reference key="1">
    <citation type="submission" date="2008-02" db="EMBL/GenBank/DDBJ databases">
        <title>Complete sequence of chromosome 3 of Burkholderia cenocepacia MC0-3.</title>
        <authorList>
            <person name="Copeland A."/>
            <person name="Lucas S."/>
            <person name="Lapidus A."/>
            <person name="Barry K."/>
            <person name="Bruce D."/>
            <person name="Goodwin L."/>
            <person name="Glavina del Rio T."/>
            <person name="Dalin E."/>
            <person name="Tice H."/>
            <person name="Pitluck S."/>
            <person name="Chain P."/>
            <person name="Malfatti S."/>
            <person name="Shin M."/>
            <person name="Vergez L."/>
            <person name="Schmutz J."/>
            <person name="Larimer F."/>
            <person name="Land M."/>
            <person name="Hauser L."/>
            <person name="Kyrpides N."/>
            <person name="Mikhailova N."/>
            <person name="Tiedje J."/>
            <person name="Richardson P."/>
        </authorList>
    </citation>
    <scope>NUCLEOTIDE SEQUENCE [LARGE SCALE GENOMIC DNA]</scope>
    <source>
        <strain>MC0-3</strain>
    </source>
</reference>
<accession>B1KAV6</accession>
<feature type="chain" id="PRO_0000351686" description="L-rhamnonate dehydratase">
    <location>
        <begin position="1"/>
        <end position="392"/>
    </location>
</feature>
<feature type="active site" description="Proton acceptor" evidence="1">
    <location>
        <position position="318"/>
    </location>
</feature>
<feature type="binding site" evidence="1">
    <location>
        <position position="22"/>
    </location>
    <ligand>
        <name>substrate</name>
    </ligand>
</feature>
<feature type="binding site" evidence="1">
    <location>
        <position position="48"/>
    </location>
    <ligand>
        <name>substrate</name>
    </ligand>
</feature>
<feature type="binding site" evidence="1">
    <location>
        <position position="214"/>
    </location>
    <ligand>
        <name>Mg(2+)</name>
        <dbReference type="ChEBI" id="CHEBI:18420"/>
    </ligand>
</feature>
<feature type="binding site" evidence="1">
    <location>
        <position position="240"/>
    </location>
    <ligand>
        <name>Mg(2+)</name>
        <dbReference type="ChEBI" id="CHEBI:18420"/>
    </ligand>
</feature>
<feature type="binding site" evidence="1">
    <location>
        <position position="268"/>
    </location>
    <ligand>
        <name>Mg(2+)</name>
        <dbReference type="ChEBI" id="CHEBI:18420"/>
    </ligand>
</feature>
<feature type="binding site" evidence="1">
    <location>
        <position position="338"/>
    </location>
    <ligand>
        <name>substrate</name>
    </ligand>
</feature>
<feature type="site" description="Increases basicity of active site His" evidence="1">
    <location>
        <position position="291"/>
    </location>
</feature>
<feature type="site" description="Transition state stabilizer" evidence="1">
    <location>
        <position position="338"/>
    </location>
</feature>
<comment type="function">
    <text evidence="1">Catalyzes the dehydration of L-rhamnonate to 2-keto-3-deoxy-L-rhamnonate (KDR).</text>
</comment>
<comment type="catalytic activity">
    <reaction evidence="1">
        <text>L-rhamnonate = 2-dehydro-3-deoxy-L-rhamnonate + H2O</text>
        <dbReference type="Rhea" id="RHEA:23080"/>
        <dbReference type="ChEBI" id="CHEBI:15377"/>
        <dbReference type="ChEBI" id="CHEBI:58118"/>
        <dbReference type="ChEBI" id="CHEBI:58371"/>
        <dbReference type="EC" id="4.2.1.90"/>
    </reaction>
</comment>
<comment type="cofactor">
    <cofactor evidence="1">
        <name>Mg(2+)</name>
        <dbReference type="ChEBI" id="CHEBI:18420"/>
    </cofactor>
    <text evidence="1">Binds 1 Mg(2+) ion per subunit.</text>
</comment>
<comment type="subunit">
    <text evidence="1">Homooctamer; tetramer of dimers.</text>
</comment>
<comment type="miscellaneous">
    <text evidence="1">Reaction proceeds via a syn dehydration.</text>
</comment>
<comment type="similarity">
    <text evidence="1">Belongs to the mandelate racemase/muconate lactonizing enzyme family. RhamD subfamily.</text>
</comment>
<evidence type="ECO:0000255" key="1">
    <source>
        <dbReference type="HAMAP-Rule" id="MF_01288"/>
    </source>
</evidence>
<proteinExistence type="inferred from homology"/>
<gene>
    <name evidence="1" type="primary">rhmD</name>
    <name type="ordered locus">Bcenmc03_6234</name>
</gene>
<keyword id="KW-0456">Lyase</keyword>
<keyword id="KW-0460">Magnesium</keyword>
<keyword id="KW-0479">Metal-binding</keyword>